<keyword id="KW-0007">Acetylation</keyword>
<keyword id="KW-0903">Direct protein sequencing</keyword>
<keyword id="KW-0249">Electron transport</keyword>
<keyword id="KW-0349">Heme</keyword>
<keyword id="KW-0408">Iron</keyword>
<keyword id="KW-0479">Metal-binding</keyword>
<keyword id="KW-0488">Methylation</keyword>
<keyword id="KW-0496">Mitochondrion</keyword>
<keyword id="KW-1185">Reference proteome</keyword>
<keyword id="KW-0679">Respiratory chain</keyword>
<keyword id="KW-0813">Transport</keyword>
<reference key="1">
    <citation type="journal article" date="1972" name="Arch. Biochem. Biophys.">
        <title>The amino acid sequence of cytochrome c from tomato (Lycopersicon esculentum Mill.).</title>
        <authorList>
            <person name="Scogin R."/>
            <person name="Richardson M."/>
            <person name="Boulter D."/>
        </authorList>
    </citation>
    <scope>PROTEIN SEQUENCE</scope>
    <scope>ACETYLATION AT ALA-1</scope>
    <scope>METHYLATION AT LYS-80 AND LYS-94</scope>
</reference>
<reference key="2">
    <citation type="journal article" date="1972" name="Proc. R. Soc. Lond., B, Biol. Sci.">
        <title>A phylogeny of higher plants based on the amino acid sequences of cytochrome c and its biological implications.</title>
        <authorList>
            <person name="Boulter D."/>
            <person name="Ramshaw J.A.M."/>
            <person name="Thompson E.W."/>
            <person name="Richardson M."/>
            <person name="Brown R.H."/>
        </authorList>
    </citation>
    <scope>SEQUENCE REVISION TO 98</scope>
</reference>
<feature type="chain" id="PRO_0000108300" description="Cytochrome c">
    <location>
        <begin position="1"/>
        <end position="111"/>
    </location>
</feature>
<feature type="binding site" description="covalent" evidence="1 2">
    <location>
        <position position="22"/>
    </location>
    <ligand>
        <name>heme c</name>
        <dbReference type="ChEBI" id="CHEBI:61717"/>
    </ligand>
</feature>
<feature type="binding site" description="covalent" evidence="1 2">
    <location>
        <position position="25"/>
    </location>
    <ligand>
        <name>heme c</name>
        <dbReference type="ChEBI" id="CHEBI:61717"/>
    </ligand>
</feature>
<feature type="binding site" description="axial binding residue">
    <location>
        <position position="26"/>
    </location>
    <ligand>
        <name>heme c</name>
        <dbReference type="ChEBI" id="CHEBI:61717"/>
    </ligand>
    <ligandPart>
        <name>Fe</name>
        <dbReference type="ChEBI" id="CHEBI:18248"/>
    </ligandPart>
</feature>
<feature type="binding site" description="axial binding residue">
    <location>
        <position position="88"/>
    </location>
    <ligand>
        <name>heme c</name>
        <dbReference type="ChEBI" id="CHEBI:61717"/>
    </ligand>
    <ligandPart>
        <name>Fe</name>
        <dbReference type="ChEBI" id="CHEBI:18248"/>
    </ligandPart>
</feature>
<feature type="modified residue" description="N-acetylalanine" evidence="2">
    <location>
        <position position="1"/>
    </location>
</feature>
<feature type="modified residue" description="N6,N6,N6-trimethyllysine" evidence="2">
    <location>
        <position position="80"/>
    </location>
</feature>
<feature type="modified residue" description="N6,N6,N6-trimethyllysine" evidence="2">
    <location>
        <position position="94"/>
    </location>
</feature>
<comment type="function">
    <text>Electron carrier protein. The oxidized form of the cytochrome c heme group can accept an electron from the heme group of the cytochrome c1 subunit of cytochrome reductase. Cytochrome c then transfers this electron to the cytochrome oxidase complex, the final protein carrier in the mitochondrial electron-transport chain.</text>
</comment>
<comment type="subcellular location">
    <subcellularLocation>
        <location>Mitochondrion intermembrane space</location>
    </subcellularLocation>
    <text>Loosely associated with the inner membrane.</text>
</comment>
<comment type="PTM">
    <text>Binds 1 heme c group covalently per subunit.</text>
</comment>
<comment type="similarity">
    <text evidence="3">Belongs to the cytochrome c family.</text>
</comment>
<comment type="online information" name="Protein Spotlight">
    <link uri="https://www.proteinspotlight.org/back_issues/076"/>
    <text>Life shuttle - Issue 76 of November 2006</text>
</comment>
<organism>
    <name type="scientific">Solanum lycopersicum</name>
    <name type="common">Tomato</name>
    <name type="synonym">Lycopersicon esculentum</name>
    <dbReference type="NCBI Taxonomy" id="4081"/>
    <lineage>
        <taxon>Eukaryota</taxon>
        <taxon>Viridiplantae</taxon>
        <taxon>Streptophyta</taxon>
        <taxon>Embryophyta</taxon>
        <taxon>Tracheophyta</taxon>
        <taxon>Spermatophyta</taxon>
        <taxon>Magnoliopsida</taxon>
        <taxon>eudicotyledons</taxon>
        <taxon>Gunneridae</taxon>
        <taxon>Pentapetalae</taxon>
        <taxon>asterids</taxon>
        <taxon>lamiids</taxon>
        <taxon>Solanales</taxon>
        <taxon>Solanaceae</taxon>
        <taxon>Solanoideae</taxon>
        <taxon>Solaneae</taxon>
        <taxon>Solanum</taxon>
        <taxon>Solanum subgen. Lycopersicon</taxon>
    </lineage>
</organism>
<name>CYC_SOLLC</name>
<accession>P00060</accession>
<proteinExistence type="evidence at protein level"/>
<sequence>ASFNEAPPGNPKAGEKIFKTKCAQCHTVEKGAGHKEGPNLNGLFGRQSGTTAGYSYSAANKNMAVNWGENTLYDYLLNPKKYIPGTKMVFPGLKKPQERADLIAYLKEATA</sequence>
<evidence type="ECO:0000255" key="1">
    <source>
        <dbReference type="PROSITE-ProRule" id="PRU00433"/>
    </source>
</evidence>
<evidence type="ECO:0000269" key="2">
    <source>
    </source>
</evidence>
<evidence type="ECO:0000305" key="3"/>
<dbReference type="PIR" id="A00053">
    <property type="entry name" value="CCTO"/>
</dbReference>
<dbReference type="SMR" id="P00060"/>
<dbReference type="FunCoup" id="P00060">
    <property type="interactions" value="1358"/>
</dbReference>
<dbReference type="STRING" id="4081.P00060"/>
<dbReference type="iPTMnet" id="P00060"/>
<dbReference type="PaxDb" id="4081-Solyc01g103220.2.1"/>
<dbReference type="eggNOG" id="KOG3453">
    <property type="taxonomic scope" value="Eukaryota"/>
</dbReference>
<dbReference type="InParanoid" id="P00060"/>
<dbReference type="Proteomes" id="UP000004994">
    <property type="component" value="Unplaced"/>
</dbReference>
<dbReference type="ExpressionAtlas" id="P00060">
    <property type="expression patterns" value="baseline and differential"/>
</dbReference>
<dbReference type="GO" id="GO:0005758">
    <property type="term" value="C:mitochondrial intermembrane space"/>
    <property type="evidence" value="ECO:0000318"/>
    <property type="project" value="GO_Central"/>
</dbReference>
<dbReference type="GO" id="GO:0009055">
    <property type="term" value="F:electron transfer activity"/>
    <property type="evidence" value="ECO:0000318"/>
    <property type="project" value="GO_Central"/>
</dbReference>
<dbReference type="GO" id="GO:0020037">
    <property type="term" value="F:heme binding"/>
    <property type="evidence" value="ECO:0007669"/>
    <property type="project" value="InterPro"/>
</dbReference>
<dbReference type="GO" id="GO:0046872">
    <property type="term" value="F:metal ion binding"/>
    <property type="evidence" value="ECO:0007669"/>
    <property type="project" value="UniProtKB-KW"/>
</dbReference>
<dbReference type="GO" id="GO:0006123">
    <property type="term" value="P:mitochondrial electron transport, cytochrome c to oxygen"/>
    <property type="evidence" value="ECO:0000318"/>
    <property type="project" value="GO_Central"/>
</dbReference>
<dbReference type="GO" id="GO:0006122">
    <property type="term" value="P:mitochondrial electron transport, ubiquinol to cytochrome c"/>
    <property type="evidence" value="ECO:0000318"/>
    <property type="project" value="GO_Central"/>
</dbReference>
<dbReference type="FunFam" id="1.10.760.10:FF:000001">
    <property type="entry name" value="Cytochrome c iso-1"/>
    <property type="match status" value="1"/>
</dbReference>
<dbReference type="Gene3D" id="1.10.760.10">
    <property type="entry name" value="Cytochrome c-like domain"/>
    <property type="match status" value="1"/>
</dbReference>
<dbReference type="InterPro" id="IPR009056">
    <property type="entry name" value="Cyt_c-like_dom"/>
</dbReference>
<dbReference type="InterPro" id="IPR036909">
    <property type="entry name" value="Cyt_c-like_dom_sf"/>
</dbReference>
<dbReference type="InterPro" id="IPR002327">
    <property type="entry name" value="Cyt_c_1A/1B"/>
</dbReference>
<dbReference type="PANTHER" id="PTHR11961">
    <property type="entry name" value="CYTOCHROME C"/>
    <property type="match status" value="1"/>
</dbReference>
<dbReference type="Pfam" id="PF00034">
    <property type="entry name" value="Cytochrom_C"/>
    <property type="match status" value="1"/>
</dbReference>
<dbReference type="PRINTS" id="PR00604">
    <property type="entry name" value="CYTCHRMECIAB"/>
</dbReference>
<dbReference type="SUPFAM" id="SSF46626">
    <property type="entry name" value="Cytochrome c"/>
    <property type="match status" value="1"/>
</dbReference>
<dbReference type="PROSITE" id="PS51007">
    <property type="entry name" value="CYTC"/>
    <property type="match status" value="1"/>
</dbReference>
<protein>
    <recommendedName>
        <fullName>Cytochrome c</fullName>
    </recommendedName>
</protein>